<accession>Q8NNT5</accession>
<accession>Q9KJU2</accession>
<gene>
    <name evidence="1" type="primary">hisD</name>
    <name type="ordered locus">Cgl2102</name>
    <name type="ordered locus">cg2305</name>
</gene>
<evidence type="ECO:0000255" key="1">
    <source>
        <dbReference type="HAMAP-Rule" id="MF_01024"/>
    </source>
</evidence>
<evidence type="ECO:0000256" key="2">
    <source>
        <dbReference type="SAM" id="MobiDB-lite"/>
    </source>
</evidence>
<evidence type="ECO:0000305" key="3"/>
<organism>
    <name type="scientific">Corynebacterium glutamicum (strain ATCC 13032 / DSM 20300 / JCM 1318 / BCRC 11384 / CCUG 27702 / LMG 3730 / NBRC 12168 / NCIMB 10025 / NRRL B-2784 / 534)</name>
    <dbReference type="NCBI Taxonomy" id="196627"/>
    <lineage>
        <taxon>Bacteria</taxon>
        <taxon>Bacillati</taxon>
        <taxon>Actinomycetota</taxon>
        <taxon>Actinomycetes</taxon>
        <taxon>Mycobacteriales</taxon>
        <taxon>Corynebacteriaceae</taxon>
        <taxon>Corynebacterium</taxon>
    </lineage>
</organism>
<proteinExistence type="inferred from homology"/>
<reference key="1">
    <citation type="submission" date="1999-06" db="EMBL/GenBank/DDBJ databases">
        <title>Molecular cloning of hisD gene from Corynebacterium glutamicum.</title>
        <authorList>
            <person name="Chun J.Y."/>
            <person name="Han M.S."/>
            <person name="Sim J.K."/>
            <person name="Lee M.-S."/>
        </authorList>
    </citation>
    <scope>NUCLEOTIDE SEQUENCE [GENOMIC DNA]</scope>
    <source>
        <strain>ATCC 13059 / LMG 3658 / NCIB 10332 / AS019 / 613</strain>
    </source>
</reference>
<reference key="2">
    <citation type="journal article" date="2003" name="Appl. Microbiol. Biotechnol.">
        <title>The Corynebacterium glutamicum genome: features and impacts on biotechnological processes.</title>
        <authorList>
            <person name="Ikeda M."/>
            <person name="Nakagawa S."/>
        </authorList>
    </citation>
    <scope>NUCLEOTIDE SEQUENCE [LARGE SCALE GENOMIC DNA]</scope>
    <source>
        <strain>ATCC 13032 / DSM 20300 / JCM 1318 / BCRC 11384 / CCUG 27702 / LMG 3730 / NBRC 12168 / NCIMB 10025 / NRRL B-2784 / 534</strain>
    </source>
</reference>
<reference key="3">
    <citation type="journal article" date="2003" name="J. Biotechnol.">
        <title>The complete Corynebacterium glutamicum ATCC 13032 genome sequence and its impact on the production of L-aspartate-derived amino acids and vitamins.</title>
        <authorList>
            <person name="Kalinowski J."/>
            <person name="Bathe B."/>
            <person name="Bartels D."/>
            <person name="Bischoff N."/>
            <person name="Bott M."/>
            <person name="Burkovski A."/>
            <person name="Dusch N."/>
            <person name="Eggeling L."/>
            <person name="Eikmanns B.J."/>
            <person name="Gaigalat L."/>
            <person name="Goesmann A."/>
            <person name="Hartmann M."/>
            <person name="Huthmacher K."/>
            <person name="Kraemer R."/>
            <person name="Linke B."/>
            <person name="McHardy A.C."/>
            <person name="Meyer F."/>
            <person name="Moeckel B."/>
            <person name="Pfefferle W."/>
            <person name="Puehler A."/>
            <person name="Rey D.A."/>
            <person name="Rueckert C."/>
            <person name="Rupp O."/>
            <person name="Sahm H."/>
            <person name="Wendisch V.F."/>
            <person name="Wiegraebe I."/>
            <person name="Tauch A."/>
        </authorList>
    </citation>
    <scope>NUCLEOTIDE SEQUENCE [LARGE SCALE GENOMIC DNA]</scope>
    <source>
        <strain>ATCC 13032 / DSM 20300 / JCM 1318 / BCRC 11384 / CCUG 27702 / LMG 3730 / NBRC 12168 / NCIMB 10025 / NRRL B-2784 / 534</strain>
    </source>
</reference>
<keyword id="KW-0028">Amino-acid biosynthesis</keyword>
<keyword id="KW-0368">Histidine biosynthesis</keyword>
<keyword id="KW-0479">Metal-binding</keyword>
<keyword id="KW-0520">NAD</keyword>
<keyword id="KW-0560">Oxidoreductase</keyword>
<keyword id="KW-1185">Reference proteome</keyword>
<keyword id="KW-0862">Zinc</keyword>
<protein>
    <recommendedName>
        <fullName evidence="1">Histidinol dehydrogenase</fullName>
        <shortName evidence="1">HDH</shortName>
        <ecNumber evidence="1">1.1.1.23</ecNumber>
    </recommendedName>
</protein>
<dbReference type="EC" id="1.1.1.23" evidence="1"/>
<dbReference type="EMBL" id="AF160480">
    <property type="protein sequence ID" value="AAF80392.1"/>
    <property type="status" value="ALT_FRAME"/>
    <property type="molecule type" value="Genomic_DNA"/>
</dbReference>
<dbReference type="EMBL" id="BA000036">
    <property type="protein sequence ID" value="BAB99495.1"/>
    <property type="molecule type" value="Genomic_DNA"/>
</dbReference>
<dbReference type="EMBL" id="BX927154">
    <property type="protein sequence ID" value="CAF20438.1"/>
    <property type="molecule type" value="Genomic_DNA"/>
</dbReference>
<dbReference type="RefSeq" id="NP_601301.1">
    <property type="nucleotide sequence ID" value="NC_003450.3"/>
</dbReference>
<dbReference type="RefSeq" id="WP_011014881.1">
    <property type="nucleotide sequence ID" value="NC_006958.1"/>
</dbReference>
<dbReference type="SMR" id="Q8NNT5"/>
<dbReference type="STRING" id="196627.cg2305"/>
<dbReference type="GeneID" id="1020053"/>
<dbReference type="KEGG" id="cgb:cg2305"/>
<dbReference type="KEGG" id="cgl:Cgl2102"/>
<dbReference type="PATRIC" id="fig|196627.13.peg.2039"/>
<dbReference type="eggNOG" id="COG0141">
    <property type="taxonomic scope" value="Bacteria"/>
</dbReference>
<dbReference type="HOGENOM" id="CLU_006732_3_1_11"/>
<dbReference type="OrthoDB" id="9805269at2"/>
<dbReference type="BioCyc" id="CORYNE:G18NG-11694-MONOMER"/>
<dbReference type="UniPathway" id="UPA00031">
    <property type="reaction ID" value="UER00014"/>
</dbReference>
<dbReference type="Proteomes" id="UP000000582">
    <property type="component" value="Chromosome"/>
</dbReference>
<dbReference type="Proteomes" id="UP000001009">
    <property type="component" value="Chromosome"/>
</dbReference>
<dbReference type="GO" id="GO:0005829">
    <property type="term" value="C:cytosol"/>
    <property type="evidence" value="ECO:0007669"/>
    <property type="project" value="TreeGrafter"/>
</dbReference>
<dbReference type="GO" id="GO:0004399">
    <property type="term" value="F:histidinol dehydrogenase activity"/>
    <property type="evidence" value="ECO:0007669"/>
    <property type="project" value="UniProtKB-UniRule"/>
</dbReference>
<dbReference type="GO" id="GO:0051287">
    <property type="term" value="F:NAD binding"/>
    <property type="evidence" value="ECO:0007669"/>
    <property type="project" value="InterPro"/>
</dbReference>
<dbReference type="GO" id="GO:0008270">
    <property type="term" value="F:zinc ion binding"/>
    <property type="evidence" value="ECO:0007669"/>
    <property type="project" value="UniProtKB-UniRule"/>
</dbReference>
<dbReference type="GO" id="GO:0000105">
    <property type="term" value="P:L-histidine biosynthetic process"/>
    <property type="evidence" value="ECO:0007669"/>
    <property type="project" value="UniProtKB-UniRule"/>
</dbReference>
<dbReference type="CDD" id="cd06572">
    <property type="entry name" value="Histidinol_dh"/>
    <property type="match status" value="1"/>
</dbReference>
<dbReference type="FunFam" id="3.40.50.1980:FF:000001">
    <property type="entry name" value="Histidinol dehydrogenase"/>
    <property type="match status" value="1"/>
</dbReference>
<dbReference type="Gene3D" id="1.20.5.1300">
    <property type="match status" value="1"/>
</dbReference>
<dbReference type="Gene3D" id="3.40.50.1980">
    <property type="entry name" value="Nitrogenase molybdenum iron protein domain"/>
    <property type="match status" value="2"/>
</dbReference>
<dbReference type="HAMAP" id="MF_01024">
    <property type="entry name" value="HisD"/>
    <property type="match status" value="1"/>
</dbReference>
<dbReference type="InterPro" id="IPR016161">
    <property type="entry name" value="Ald_DH/histidinol_DH"/>
</dbReference>
<dbReference type="InterPro" id="IPR001692">
    <property type="entry name" value="Histidinol_DH_CS"/>
</dbReference>
<dbReference type="InterPro" id="IPR022695">
    <property type="entry name" value="Histidinol_DH_monofunct"/>
</dbReference>
<dbReference type="InterPro" id="IPR012131">
    <property type="entry name" value="Hstdl_DH"/>
</dbReference>
<dbReference type="NCBIfam" id="TIGR00069">
    <property type="entry name" value="hisD"/>
    <property type="match status" value="1"/>
</dbReference>
<dbReference type="PANTHER" id="PTHR21256:SF2">
    <property type="entry name" value="HISTIDINE BIOSYNTHESIS TRIFUNCTIONAL PROTEIN"/>
    <property type="match status" value="1"/>
</dbReference>
<dbReference type="PANTHER" id="PTHR21256">
    <property type="entry name" value="HISTIDINOL DEHYDROGENASE HDH"/>
    <property type="match status" value="1"/>
</dbReference>
<dbReference type="Pfam" id="PF00815">
    <property type="entry name" value="Histidinol_dh"/>
    <property type="match status" value="1"/>
</dbReference>
<dbReference type="PIRSF" id="PIRSF000099">
    <property type="entry name" value="Histidinol_dh"/>
    <property type="match status" value="1"/>
</dbReference>
<dbReference type="PRINTS" id="PR00083">
    <property type="entry name" value="HOLDHDRGNASE"/>
</dbReference>
<dbReference type="SUPFAM" id="SSF53720">
    <property type="entry name" value="ALDH-like"/>
    <property type="match status" value="1"/>
</dbReference>
<dbReference type="PROSITE" id="PS00611">
    <property type="entry name" value="HISOL_DEHYDROGENASE"/>
    <property type="match status" value="1"/>
</dbReference>
<sequence length="442" mass="46771">MLNVTDLRGQTPSKSDIRRALPRGGTDVWSVLPIVQPVVEDVQNRGAEAALDYGEKFDHIRPASVRVPAEVIAAAENTLDPLVRESIEESIRRVRKVHAEQKPSEHTTELSPGGTVTERFMPIDRVGLYVPGGNAVYPSSVIMNTVPAQEAGVNSLVVASPPQAEHGGWPHPTILAACSILGVDEVWAVGGGQAVALLAYGDDAAGLEPVDMITGPGNIFVTAAKRLVRGVVGTDSEAGPTEIAVLADASANAVNVAYDLISQAEHDVMAASVLITDSEQLAKDVNREIEARYSITRNAERVAEALRGAQSGIVLVDDISVGIQVADQYAAEHLEIHTENARAVAEQITNAGAIFVGDFSPVPLGDYSAGSNHVLPTSGSARFSAGLSTHTFLRPVNLIEYDEAALKDVSQVVINFANAEDLPAHGEAIRARFENLPTTDEA</sequence>
<feature type="chain" id="PRO_0000135761" description="Histidinol dehydrogenase">
    <location>
        <begin position="1"/>
        <end position="442"/>
    </location>
</feature>
<feature type="region of interest" description="Disordered" evidence="2">
    <location>
        <begin position="1"/>
        <end position="20"/>
    </location>
</feature>
<feature type="active site" description="Proton acceptor" evidence="1">
    <location>
        <position position="332"/>
    </location>
</feature>
<feature type="active site" description="Proton acceptor" evidence="1">
    <location>
        <position position="333"/>
    </location>
</feature>
<feature type="binding site" evidence="1">
    <location>
        <position position="129"/>
    </location>
    <ligand>
        <name>NAD(+)</name>
        <dbReference type="ChEBI" id="CHEBI:57540"/>
    </ligand>
</feature>
<feature type="binding site" evidence="1">
    <location>
        <position position="193"/>
    </location>
    <ligand>
        <name>NAD(+)</name>
        <dbReference type="ChEBI" id="CHEBI:57540"/>
    </ligand>
</feature>
<feature type="binding site" evidence="1">
    <location>
        <position position="218"/>
    </location>
    <ligand>
        <name>NAD(+)</name>
        <dbReference type="ChEBI" id="CHEBI:57540"/>
    </ligand>
</feature>
<feature type="binding site" evidence="1">
    <location>
        <position position="241"/>
    </location>
    <ligand>
        <name>substrate</name>
    </ligand>
</feature>
<feature type="binding site" evidence="1">
    <location>
        <position position="263"/>
    </location>
    <ligand>
        <name>substrate</name>
    </ligand>
</feature>
<feature type="binding site" evidence="1">
    <location>
        <position position="263"/>
    </location>
    <ligand>
        <name>Zn(2+)</name>
        <dbReference type="ChEBI" id="CHEBI:29105"/>
    </ligand>
</feature>
<feature type="binding site" evidence="1">
    <location>
        <position position="266"/>
    </location>
    <ligand>
        <name>substrate</name>
    </ligand>
</feature>
<feature type="binding site" evidence="1">
    <location>
        <position position="266"/>
    </location>
    <ligand>
        <name>Zn(2+)</name>
        <dbReference type="ChEBI" id="CHEBI:29105"/>
    </ligand>
</feature>
<feature type="binding site" evidence="1">
    <location>
        <position position="333"/>
    </location>
    <ligand>
        <name>substrate</name>
    </ligand>
</feature>
<feature type="binding site" evidence="1">
    <location>
        <position position="366"/>
    </location>
    <ligand>
        <name>substrate</name>
    </ligand>
</feature>
<feature type="binding site" evidence="1">
    <location>
        <position position="366"/>
    </location>
    <ligand>
        <name>Zn(2+)</name>
        <dbReference type="ChEBI" id="CHEBI:29105"/>
    </ligand>
</feature>
<feature type="binding site" evidence="1">
    <location>
        <position position="420"/>
    </location>
    <ligand>
        <name>substrate</name>
    </ligand>
</feature>
<feature type="binding site" evidence="1">
    <location>
        <position position="425"/>
    </location>
    <ligand>
        <name>substrate</name>
    </ligand>
</feature>
<feature type="binding site" evidence="1">
    <location>
        <position position="425"/>
    </location>
    <ligand>
        <name>Zn(2+)</name>
        <dbReference type="ChEBI" id="CHEBI:29105"/>
    </ligand>
</feature>
<feature type="sequence conflict" description="In Ref. 1." evidence="3" ref="1">
    <location>
        <begin position="372"/>
        <end position="380"/>
    </location>
</feature>
<name>HISX_CORGL</name>
<comment type="function">
    <text evidence="1">Catalyzes the sequential NAD-dependent oxidations of L-histidinol to L-histidinaldehyde and then to L-histidine.</text>
</comment>
<comment type="catalytic activity">
    <reaction evidence="1">
        <text>L-histidinol + 2 NAD(+) + H2O = L-histidine + 2 NADH + 3 H(+)</text>
        <dbReference type="Rhea" id="RHEA:20641"/>
        <dbReference type="ChEBI" id="CHEBI:15377"/>
        <dbReference type="ChEBI" id="CHEBI:15378"/>
        <dbReference type="ChEBI" id="CHEBI:57540"/>
        <dbReference type="ChEBI" id="CHEBI:57595"/>
        <dbReference type="ChEBI" id="CHEBI:57699"/>
        <dbReference type="ChEBI" id="CHEBI:57945"/>
        <dbReference type="EC" id="1.1.1.23"/>
    </reaction>
</comment>
<comment type="cofactor">
    <cofactor evidence="1">
        <name>Zn(2+)</name>
        <dbReference type="ChEBI" id="CHEBI:29105"/>
    </cofactor>
    <text evidence="1">Binds 1 zinc ion per subunit.</text>
</comment>
<comment type="pathway">
    <text evidence="1">Amino-acid biosynthesis; L-histidine biosynthesis; L-histidine from 5-phospho-alpha-D-ribose 1-diphosphate: step 9/9.</text>
</comment>
<comment type="similarity">
    <text evidence="1">Belongs to the histidinol dehydrogenase family.</text>
</comment>
<comment type="sequence caution" evidence="3">
    <conflict type="frameshift">
        <sequence resource="EMBL-CDS" id="AAF80392"/>
    </conflict>
</comment>